<name>RISB_SYNR3</name>
<evidence type="ECO:0000255" key="1">
    <source>
        <dbReference type="HAMAP-Rule" id="MF_00178"/>
    </source>
</evidence>
<proteinExistence type="inferred from homology"/>
<feature type="chain" id="PRO_1000040534" description="6,7-dimethyl-8-ribityllumazine synthase">
    <location>
        <begin position="1"/>
        <end position="159"/>
    </location>
</feature>
<feature type="active site" description="Proton donor" evidence="1">
    <location>
        <position position="93"/>
    </location>
</feature>
<feature type="binding site" evidence="1">
    <location>
        <position position="23"/>
    </location>
    <ligand>
        <name>5-amino-6-(D-ribitylamino)uracil</name>
        <dbReference type="ChEBI" id="CHEBI:15934"/>
    </ligand>
</feature>
<feature type="binding site" evidence="1">
    <location>
        <begin position="61"/>
        <end position="63"/>
    </location>
    <ligand>
        <name>5-amino-6-(D-ribitylamino)uracil</name>
        <dbReference type="ChEBI" id="CHEBI:15934"/>
    </ligand>
</feature>
<feature type="binding site" evidence="1">
    <location>
        <begin position="85"/>
        <end position="87"/>
    </location>
    <ligand>
        <name>5-amino-6-(D-ribitylamino)uracil</name>
        <dbReference type="ChEBI" id="CHEBI:15934"/>
    </ligand>
</feature>
<feature type="binding site" evidence="1">
    <location>
        <begin position="90"/>
        <end position="91"/>
    </location>
    <ligand>
        <name>(2S)-2-hydroxy-3-oxobutyl phosphate</name>
        <dbReference type="ChEBI" id="CHEBI:58830"/>
    </ligand>
</feature>
<feature type="binding site" evidence="1">
    <location>
        <position position="118"/>
    </location>
    <ligand>
        <name>5-amino-6-(D-ribitylamino)uracil</name>
        <dbReference type="ChEBI" id="CHEBI:15934"/>
    </ligand>
</feature>
<feature type="binding site" evidence="1">
    <location>
        <position position="132"/>
    </location>
    <ligand>
        <name>(2S)-2-hydroxy-3-oxobutyl phosphate</name>
        <dbReference type="ChEBI" id="CHEBI:58830"/>
    </ligand>
</feature>
<reference key="1">
    <citation type="submission" date="2006-05" db="EMBL/GenBank/DDBJ databases">
        <authorList>
            <consortium name="Genoscope"/>
        </authorList>
    </citation>
    <scope>NUCLEOTIDE SEQUENCE [LARGE SCALE GENOMIC DNA]</scope>
    <source>
        <strain>RCC307</strain>
    </source>
</reference>
<gene>
    <name evidence="1" type="primary">ribH</name>
    <name type="ordered locus">SynRCC307_0080</name>
</gene>
<accession>A5GQ24</accession>
<comment type="function">
    <text evidence="1">Catalyzes the formation of 6,7-dimethyl-8-ribityllumazine by condensation of 5-amino-6-(D-ribitylamino)uracil with 3,4-dihydroxy-2-butanone 4-phosphate. This is the penultimate step in the biosynthesis of riboflavin.</text>
</comment>
<comment type="catalytic activity">
    <reaction evidence="1">
        <text>(2S)-2-hydroxy-3-oxobutyl phosphate + 5-amino-6-(D-ribitylamino)uracil = 6,7-dimethyl-8-(1-D-ribityl)lumazine + phosphate + 2 H2O + H(+)</text>
        <dbReference type="Rhea" id="RHEA:26152"/>
        <dbReference type="ChEBI" id="CHEBI:15377"/>
        <dbReference type="ChEBI" id="CHEBI:15378"/>
        <dbReference type="ChEBI" id="CHEBI:15934"/>
        <dbReference type="ChEBI" id="CHEBI:43474"/>
        <dbReference type="ChEBI" id="CHEBI:58201"/>
        <dbReference type="ChEBI" id="CHEBI:58830"/>
        <dbReference type="EC" id="2.5.1.78"/>
    </reaction>
</comment>
<comment type="pathway">
    <text evidence="1">Cofactor biosynthesis; riboflavin biosynthesis; riboflavin from 2-hydroxy-3-oxobutyl phosphate and 5-amino-6-(D-ribitylamino)uracil: step 1/2.</text>
</comment>
<comment type="similarity">
    <text evidence="1">Belongs to the DMRL synthase family.</text>
</comment>
<protein>
    <recommendedName>
        <fullName evidence="1">6,7-dimethyl-8-ribityllumazine synthase</fullName>
        <shortName evidence="1">DMRL synthase</shortName>
        <shortName evidence="1">LS</shortName>
        <shortName evidence="1">Lumazine synthase</shortName>
        <ecNumber evidence="1">2.5.1.78</ecNumber>
    </recommendedName>
</protein>
<sequence>MTVFEGRFTDAGGLRIAVVVARFNDLVTGKLLSGCLDCLSRHGIDVAETSSQLDLAWVPGSFEIPLLAKRLASSGRYDVVITLGAVIRGDTPHFDVVVAEVSKGVAAVARESGVPVIFGVLTTDTLQQALERAGIKSNLGWNYGLQALEMGSLMRSVPA</sequence>
<keyword id="KW-1185">Reference proteome</keyword>
<keyword id="KW-0686">Riboflavin biosynthesis</keyword>
<keyword id="KW-0808">Transferase</keyword>
<dbReference type="EC" id="2.5.1.78" evidence="1"/>
<dbReference type="EMBL" id="CT978603">
    <property type="protein sequence ID" value="CAK26983.1"/>
    <property type="molecule type" value="Genomic_DNA"/>
</dbReference>
<dbReference type="SMR" id="A5GQ24"/>
<dbReference type="STRING" id="316278.SynRCC307_0080"/>
<dbReference type="KEGG" id="syr:SynRCC307_0080"/>
<dbReference type="eggNOG" id="COG0054">
    <property type="taxonomic scope" value="Bacteria"/>
</dbReference>
<dbReference type="HOGENOM" id="CLU_089358_1_0_3"/>
<dbReference type="OrthoDB" id="9809709at2"/>
<dbReference type="UniPathway" id="UPA00275">
    <property type="reaction ID" value="UER00404"/>
</dbReference>
<dbReference type="Proteomes" id="UP000001115">
    <property type="component" value="Chromosome"/>
</dbReference>
<dbReference type="GO" id="GO:0005829">
    <property type="term" value="C:cytosol"/>
    <property type="evidence" value="ECO:0007669"/>
    <property type="project" value="TreeGrafter"/>
</dbReference>
<dbReference type="GO" id="GO:0009349">
    <property type="term" value="C:riboflavin synthase complex"/>
    <property type="evidence" value="ECO:0007669"/>
    <property type="project" value="InterPro"/>
</dbReference>
<dbReference type="GO" id="GO:0000906">
    <property type="term" value="F:6,7-dimethyl-8-ribityllumazine synthase activity"/>
    <property type="evidence" value="ECO:0007669"/>
    <property type="project" value="UniProtKB-UniRule"/>
</dbReference>
<dbReference type="GO" id="GO:0009231">
    <property type="term" value="P:riboflavin biosynthetic process"/>
    <property type="evidence" value="ECO:0007669"/>
    <property type="project" value="UniProtKB-UniRule"/>
</dbReference>
<dbReference type="CDD" id="cd09209">
    <property type="entry name" value="Lumazine_synthase-I"/>
    <property type="match status" value="1"/>
</dbReference>
<dbReference type="Gene3D" id="3.40.50.960">
    <property type="entry name" value="Lumazine/riboflavin synthase"/>
    <property type="match status" value="1"/>
</dbReference>
<dbReference type="HAMAP" id="MF_00178">
    <property type="entry name" value="Lumazine_synth"/>
    <property type="match status" value="1"/>
</dbReference>
<dbReference type="InterPro" id="IPR034964">
    <property type="entry name" value="LS"/>
</dbReference>
<dbReference type="InterPro" id="IPR002180">
    <property type="entry name" value="LS/RS"/>
</dbReference>
<dbReference type="InterPro" id="IPR036467">
    <property type="entry name" value="LS/RS_sf"/>
</dbReference>
<dbReference type="NCBIfam" id="TIGR00114">
    <property type="entry name" value="lumazine-synth"/>
    <property type="match status" value="1"/>
</dbReference>
<dbReference type="PANTHER" id="PTHR21058:SF0">
    <property type="entry name" value="6,7-DIMETHYL-8-RIBITYLLUMAZINE SYNTHASE"/>
    <property type="match status" value="1"/>
</dbReference>
<dbReference type="PANTHER" id="PTHR21058">
    <property type="entry name" value="6,7-DIMETHYL-8-RIBITYLLUMAZINE SYNTHASE DMRL SYNTHASE LUMAZINE SYNTHASE"/>
    <property type="match status" value="1"/>
</dbReference>
<dbReference type="Pfam" id="PF00885">
    <property type="entry name" value="DMRL_synthase"/>
    <property type="match status" value="1"/>
</dbReference>
<dbReference type="SUPFAM" id="SSF52121">
    <property type="entry name" value="Lumazine synthase"/>
    <property type="match status" value="1"/>
</dbReference>
<organism>
    <name type="scientific">Synechococcus sp. (strain RCC307)</name>
    <dbReference type="NCBI Taxonomy" id="316278"/>
    <lineage>
        <taxon>Bacteria</taxon>
        <taxon>Bacillati</taxon>
        <taxon>Cyanobacteriota</taxon>
        <taxon>Cyanophyceae</taxon>
        <taxon>Synechococcales</taxon>
        <taxon>Synechococcaceae</taxon>
        <taxon>Synechococcus</taxon>
    </lineage>
</organism>